<name>GREA_SYNWW</name>
<reference key="1">
    <citation type="journal article" date="2010" name="Environ. Microbiol.">
        <title>The genome of Syntrophomonas wolfei: new insights into syntrophic metabolism and biohydrogen production.</title>
        <authorList>
            <person name="Sieber J.R."/>
            <person name="Sims D.R."/>
            <person name="Han C."/>
            <person name="Kim E."/>
            <person name="Lykidis A."/>
            <person name="Lapidus A.L."/>
            <person name="McDonnald E."/>
            <person name="Rohlin L."/>
            <person name="Culley D.E."/>
            <person name="Gunsalus R."/>
            <person name="McInerney M.J."/>
        </authorList>
    </citation>
    <scope>NUCLEOTIDE SEQUENCE [LARGE SCALE GENOMIC DNA]</scope>
    <source>
        <strain>DSM 2245B / Goettingen</strain>
    </source>
</reference>
<sequence>MAEEKEVVLTKEGLEKLENELEHLKSVKREEVAERIKQAIAFGDITENSEYEDAKNEQAFIEGRIISLEKTLKKARLMEDEDIRTDVVSLGSRITLKEMKSGREVTVTLVSSVESKLKDGKISDESPVGKAIMGKKVKSTVSVEAPAGTIKYKIIKVEK</sequence>
<gene>
    <name evidence="1" type="primary">greA</name>
    <name type="ordered locus">Swol_0115</name>
</gene>
<proteinExistence type="inferred from homology"/>
<protein>
    <recommendedName>
        <fullName evidence="1">Transcription elongation factor GreA</fullName>
    </recommendedName>
    <alternativeName>
        <fullName evidence="1">Transcript cleavage factor GreA</fullName>
    </alternativeName>
</protein>
<accession>Q0B0N4</accession>
<dbReference type="EMBL" id="CP000448">
    <property type="protein sequence ID" value="ABI67470.1"/>
    <property type="molecule type" value="Genomic_DNA"/>
</dbReference>
<dbReference type="RefSeq" id="WP_011639581.1">
    <property type="nucleotide sequence ID" value="NC_008346.1"/>
</dbReference>
<dbReference type="SMR" id="Q0B0N4"/>
<dbReference type="STRING" id="335541.Swol_0115"/>
<dbReference type="KEGG" id="swo:Swol_0115"/>
<dbReference type="eggNOG" id="COG0782">
    <property type="taxonomic scope" value="Bacteria"/>
</dbReference>
<dbReference type="HOGENOM" id="CLU_101379_2_1_9"/>
<dbReference type="OrthoDB" id="9808774at2"/>
<dbReference type="Proteomes" id="UP000001968">
    <property type="component" value="Chromosome"/>
</dbReference>
<dbReference type="GO" id="GO:0003677">
    <property type="term" value="F:DNA binding"/>
    <property type="evidence" value="ECO:0007669"/>
    <property type="project" value="UniProtKB-UniRule"/>
</dbReference>
<dbReference type="GO" id="GO:0070063">
    <property type="term" value="F:RNA polymerase binding"/>
    <property type="evidence" value="ECO:0007669"/>
    <property type="project" value="InterPro"/>
</dbReference>
<dbReference type="GO" id="GO:0006354">
    <property type="term" value="P:DNA-templated transcription elongation"/>
    <property type="evidence" value="ECO:0007669"/>
    <property type="project" value="TreeGrafter"/>
</dbReference>
<dbReference type="GO" id="GO:0032784">
    <property type="term" value="P:regulation of DNA-templated transcription elongation"/>
    <property type="evidence" value="ECO:0007669"/>
    <property type="project" value="UniProtKB-UniRule"/>
</dbReference>
<dbReference type="FunFam" id="1.10.287.180:FF:000001">
    <property type="entry name" value="Transcription elongation factor GreA"/>
    <property type="match status" value="1"/>
</dbReference>
<dbReference type="Gene3D" id="3.10.50.30">
    <property type="entry name" value="Transcription elongation factor, GreA/GreB, C-terminal domain"/>
    <property type="match status" value="1"/>
</dbReference>
<dbReference type="Gene3D" id="1.10.287.180">
    <property type="entry name" value="Transcription elongation factor, GreA/GreB, N-terminal domain"/>
    <property type="match status" value="1"/>
</dbReference>
<dbReference type="HAMAP" id="MF_00105">
    <property type="entry name" value="GreA_GreB"/>
    <property type="match status" value="1"/>
</dbReference>
<dbReference type="InterPro" id="IPR036953">
    <property type="entry name" value="GreA/GreB_C_sf"/>
</dbReference>
<dbReference type="InterPro" id="IPR018151">
    <property type="entry name" value="TF_GreA/GreB_CS"/>
</dbReference>
<dbReference type="InterPro" id="IPR006359">
    <property type="entry name" value="Tscrpt_elong_fac_GreA"/>
</dbReference>
<dbReference type="InterPro" id="IPR028624">
    <property type="entry name" value="Tscrpt_elong_fac_GreA/B"/>
</dbReference>
<dbReference type="InterPro" id="IPR001437">
    <property type="entry name" value="Tscrpt_elong_fac_GreA/B_C"/>
</dbReference>
<dbReference type="InterPro" id="IPR023459">
    <property type="entry name" value="Tscrpt_elong_fac_GreA/B_fam"/>
</dbReference>
<dbReference type="InterPro" id="IPR022691">
    <property type="entry name" value="Tscrpt_elong_fac_GreA/B_N"/>
</dbReference>
<dbReference type="InterPro" id="IPR036805">
    <property type="entry name" value="Tscrpt_elong_fac_GreA/B_N_sf"/>
</dbReference>
<dbReference type="NCBIfam" id="TIGR01462">
    <property type="entry name" value="greA"/>
    <property type="match status" value="1"/>
</dbReference>
<dbReference type="NCBIfam" id="NF001263">
    <property type="entry name" value="PRK00226.1-4"/>
    <property type="match status" value="1"/>
</dbReference>
<dbReference type="PANTHER" id="PTHR30437">
    <property type="entry name" value="TRANSCRIPTION ELONGATION FACTOR GREA"/>
    <property type="match status" value="1"/>
</dbReference>
<dbReference type="PANTHER" id="PTHR30437:SF4">
    <property type="entry name" value="TRANSCRIPTION ELONGATION FACTOR GREA"/>
    <property type="match status" value="1"/>
</dbReference>
<dbReference type="Pfam" id="PF01272">
    <property type="entry name" value="GreA_GreB"/>
    <property type="match status" value="1"/>
</dbReference>
<dbReference type="Pfam" id="PF03449">
    <property type="entry name" value="GreA_GreB_N"/>
    <property type="match status" value="1"/>
</dbReference>
<dbReference type="PIRSF" id="PIRSF006092">
    <property type="entry name" value="GreA_GreB"/>
    <property type="match status" value="1"/>
</dbReference>
<dbReference type="SUPFAM" id="SSF54534">
    <property type="entry name" value="FKBP-like"/>
    <property type="match status" value="1"/>
</dbReference>
<dbReference type="SUPFAM" id="SSF46557">
    <property type="entry name" value="GreA transcript cleavage protein, N-terminal domain"/>
    <property type="match status" value="1"/>
</dbReference>
<dbReference type="PROSITE" id="PS00829">
    <property type="entry name" value="GREAB_1"/>
    <property type="match status" value="1"/>
</dbReference>
<evidence type="ECO:0000255" key="1">
    <source>
        <dbReference type="HAMAP-Rule" id="MF_00105"/>
    </source>
</evidence>
<feature type="chain" id="PRO_1000034318" description="Transcription elongation factor GreA">
    <location>
        <begin position="1"/>
        <end position="159"/>
    </location>
</feature>
<feature type="coiled-coil region" evidence="1">
    <location>
        <begin position="1"/>
        <end position="76"/>
    </location>
</feature>
<organism>
    <name type="scientific">Syntrophomonas wolfei subsp. wolfei (strain DSM 2245B / Goettingen)</name>
    <dbReference type="NCBI Taxonomy" id="335541"/>
    <lineage>
        <taxon>Bacteria</taxon>
        <taxon>Bacillati</taxon>
        <taxon>Bacillota</taxon>
        <taxon>Clostridia</taxon>
        <taxon>Eubacteriales</taxon>
        <taxon>Syntrophomonadaceae</taxon>
        <taxon>Syntrophomonas</taxon>
    </lineage>
</organism>
<keyword id="KW-0175">Coiled coil</keyword>
<keyword id="KW-0238">DNA-binding</keyword>
<keyword id="KW-1185">Reference proteome</keyword>
<keyword id="KW-0804">Transcription</keyword>
<keyword id="KW-0805">Transcription regulation</keyword>
<comment type="function">
    <text evidence="1">Necessary for efficient RNA polymerase transcription elongation past template-encoded arresting sites. The arresting sites in DNA have the property of trapping a certain fraction of elongating RNA polymerases that pass through, resulting in locked ternary complexes. Cleavage of the nascent transcript by cleavage factors such as GreA or GreB allows the resumption of elongation from the new 3'terminus. GreA releases sequences of 2 to 3 nucleotides.</text>
</comment>
<comment type="similarity">
    <text evidence="1">Belongs to the GreA/GreB family.</text>
</comment>